<organism>
    <name type="scientific">Methanococcoides burtonii (strain DSM 6242 / NBRC 107633 / OCM 468 / ACE-M)</name>
    <dbReference type="NCBI Taxonomy" id="259564"/>
    <lineage>
        <taxon>Archaea</taxon>
        <taxon>Methanobacteriati</taxon>
        <taxon>Methanobacteriota</taxon>
        <taxon>Stenosarchaea group</taxon>
        <taxon>Methanomicrobia</taxon>
        <taxon>Methanosarcinales</taxon>
        <taxon>Methanosarcinaceae</taxon>
        <taxon>Methanococcoides</taxon>
    </lineage>
</organism>
<comment type="function">
    <text evidence="1">S-adenosyl-L-methionine-dependent methyltransferase that catalyzes the trimethylation of the amino group of the modified target histidine residue in translation elongation factor 2 (EF-2), to form an intermediate called diphthine. The three successive methylation reactions represent the second step of diphthamide biosynthesis.</text>
</comment>
<comment type="catalytic activity">
    <reaction evidence="1">
        <text>2-[(3S)-amino-3-carboxypropyl]-L-histidyl-[translation elongation factor 2] + 3 S-adenosyl-L-methionine = diphthine-[translation elongation factor 2] + 3 S-adenosyl-L-homocysteine + 3 H(+)</text>
        <dbReference type="Rhea" id="RHEA:36415"/>
        <dbReference type="Rhea" id="RHEA-COMP:9749"/>
        <dbReference type="Rhea" id="RHEA-COMP:10172"/>
        <dbReference type="ChEBI" id="CHEBI:15378"/>
        <dbReference type="ChEBI" id="CHEBI:57856"/>
        <dbReference type="ChEBI" id="CHEBI:59789"/>
        <dbReference type="ChEBI" id="CHEBI:73995"/>
        <dbReference type="ChEBI" id="CHEBI:82696"/>
        <dbReference type="EC" id="2.1.1.98"/>
    </reaction>
</comment>
<comment type="pathway">
    <text evidence="1">Protein modification; peptidyl-diphthamide biosynthesis.</text>
</comment>
<comment type="subunit">
    <text evidence="1">Homodimer.</text>
</comment>
<comment type="similarity">
    <text evidence="1">Belongs to the diphthine synthase family.</text>
</comment>
<keyword id="KW-0489">Methyltransferase</keyword>
<keyword id="KW-0949">S-adenosyl-L-methionine</keyword>
<keyword id="KW-0808">Transferase</keyword>
<gene>
    <name evidence="1" type="primary">dphB</name>
    <name type="ordered locus">Mbur_0971</name>
</gene>
<dbReference type="EC" id="2.1.1.98" evidence="1"/>
<dbReference type="EMBL" id="CP000300">
    <property type="protein sequence ID" value="ABE51912.1"/>
    <property type="molecule type" value="Genomic_DNA"/>
</dbReference>
<dbReference type="RefSeq" id="WP_011499061.1">
    <property type="nucleotide sequence ID" value="NC_007955.1"/>
</dbReference>
<dbReference type="SMR" id="Q12XB4"/>
<dbReference type="STRING" id="259564.Mbur_0971"/>
<dbReference type="GeneID" id="3997894"/>
<dbReference type="KEGG" id="mbu:Mbur_0971"/>
<dbReference type="HOGENOM" id="CLU_066040_0_0_2"/>
<dbReference type="OrthoDB" id="39139at2157"/>
<dbReference type="UniPathway" id="UPA00559"/>
<dbReference type="Proteomes" id="UP000001979">
    <property type="component" value="Chromosome"/>
</dbReference>
<dbReference type="GO" id="GO:0004164">
    <property type="term" value="F:diphthine synthase activity"/>
    <property type="evidence" value="ECO:0007669"/>
    <property type="project" value="UniProtKB-UniRule"/>
</dbReference>
<dbReference type="GO" id="GO:0032259">
    <property type="term" value="P:methylation"/>
    <property type="evidence" value="ECO:0007669"/>
    <property type="project" value="UniProtKB-KW"/>
</dbReference>
<dbReference type="GO" id="GO:0017183">
    <property type="term" value="P:protein histidyl modification to diphthamide"/>
    <property type="evidence" value="ECO:0007669"/>
    <property type="project" value="UniProtKB-UniRule"/>
</dbReference>
<dbReference type="CDD" id="cd11647">
    <property type="entry name" value="DHP5_DphB"/>
    <property type="match status" value="1"/>
</dbReference>
<dbReference type="Gene3D" id="3.40.1010.10">
    <property type="entry name" value="Cobalt-precorrin-4 Transmethylase, Domain 1"/>
    <property type="match status" value="1"/>
</dbReference>
<dbReference type="Gene3D" id="3.30.950.10">
    <property type="entry name" value="Methyltransferase, Cobalt-precorrin-4 Transmethylase, Domain 2"/>
    <property type="match status" value="1"/>
</dbReference>
<dbReference type="HAMAP" id="MF_01084">
    <property type="entry name" value="Diphthine_synth"/>
    <property type="match status" value="1"/>
</dbReference>
<dbReference type="InterPro" id="IPR000878">
    <property type="entry name" value="4pyrrol_Mease"/>
</dbReference>
<dbReference type="InterPro" id="IPR035996">
    <property type="entry name" value="4pyrrol_Methylase_sf"/>
</dbReference>
<dbReference type="InterPro" id="IPR014777">
    <property type="entry name" value="4pyrrole_Mease_sub1"/>
</dbReference>
<dbReference type="InterPro" id="IPR014776">
    <property type="entry name" value="4pyrrole_Mease_sub2"/>
</dbReference>
<dbReference type="InterPro" id="IPR004551">
    <property type="entry name" value="Dphthn_synthase"/>
</dbReference>
<dbReference type="NCBIfam" id="TIGR00522">
    <property type="entry name" value="dph5"/>
    <property type="match status" value="1"/>
</dbReference>
<dbReference type="PANTHER" id="PTHR10882:SF0">
    <property type="entry name" value="DIPHTHINE METHYL ESTER SYNTHASE"/>
    <property type="match status" value="1"/>
</dbReference>
<dbReference type="PANTHER" id="PTHR10882">
    <property type="entry name" value="DIPHTHINE SYNTHASE"/>
    <property type="match status" value="1"/>
</dbReference>
<dbReference type="Pfam" id="PF00590">
    <property type="entry name" value="TP_methylase"/>
    <property type="match status" value="1"/>
</dbReference>
<dbReference type="PIRSF" id="PIRSF036432">
    <property type="entry name" value="Diphthine_synth"/>
    <property type="match status" value="1"/>
</dbReference>
<dbReference type="SUPFAM" id="SSF53790">
    <property type="entry name" value="Tetrapyrrole methylase"/>
    <property type="match status" value="1"/>
</dbReference>
<sequence length="267" mass="29250">MLDFVGLGLFDEKDISLKGLEKIHNADKVYVEFYTSILMGTDLEKMEMLYKKKITVLSREDVEQHAEDWLVDAKDSNVVFLTGGDTMVSTTHVDLRLRAADMGIKTTLIHGASIASAICGLSGLQNYRFGKSVTIPHPYVSNRGVRVVSQTPYDTIKNNIEAGLHTAVFLDIDKDKGYMTVNQAMEILLEVEGKLGEGVMVDRLAVGIARAGSPSPVVKADYIEALRDYYLGGPLHIVVIPAELHFVEAEALVKLAGAPEGILENID</sequence>
<proteinExistence type="inferred from homology"/>
<protein>
    <recommendedName>
        <fullName evidence="1">Diphthine synthase</fullName>
        <ecNumber evidence="1">2.1.1.98</ecNumber>
    </recommendedName>
    <alternativeName>
        <fullName evidence="1">Diphthamide biosynthesis methyltransferase</fullName>
    </alternativeName>
</protein>
<evidence type="ECO:0000255" key="1">
    <source>
        <dbReference type="HAMAP-Rule" id="MF_01084"/>
    </source>
</evidence>
<accession>Q12XB4</accession>
<feature type="chain" id="PRO_1000064818" description="Diphthine synthase">
    <location>
        <begin position="1"/>
        <end position="267"/>
    </location>
</feature>
<feature type="binding site" evidence="1">
    <location>
        <position position="9"/>
    </location>
    <ligand>
        <name>S-adenosyl-L-methionine</name>
        <dbReference type="ChEBI" id="CHEBI:59789"/>
    </ligand>
</feature>
<feature type="binding site" evidence="1">
    <location>
        <position position="85"/>
    </location>
    <ligand>
        <name>S-adenosyl-L-methionine</name>
        <dbReference type="ChEBI" id="CHEBI:59789"/>
    </ligand>
</feature>
<feature type="binding site" evidence="1">
    <location>
        <position position="88"/>
    </location>
    <ligand>
        <name>S-adenosyl-L-methionine</name>
        <dbReference type="ChEBI" id="CHEBI:59789"/>
    </ligand>
</feature>
<feature type="binding site" evidence="1">
    <location>
        <begin position="113"/>
        <end position="114"/>
    </location>
    <ligand>
        <name>S-adenosyl-L-methionine</name>
        <dbReference type="ChEBI" id="CHEBI:59789"/>
    </ligand>
</feature>
<feature type="binding site" evidence="1">
    <location>
        <position position="170"/>
    </location>
    <ligand>
        <name>S-adenosyl-L-methionine</name>
        <dbReference type="ChEBI" id="CHEBI:59789"/>
    </ligand>
</feature>
<feature type="binding site" evidence="1">
    <location>
        <position position="211"/>
    </location>
    <ligand>
        <name>S-adenosyl-L-methionine</name>
        <dbReference type="ChEBI" id="CHEBI:59789"/>
    </ligand>
</feature>
<feature type="binding site" evidence="1">
    <location>
        <position position="236"/>
    </location>
    <ligand>
        <name>S-adenosyl-L-methionine</name>
        <dbReference type="ChEBI" id="CHEBI:59789"/>
    </ligand>
</feature>
<reference key="1">
    <citation type="journal article" date="2009" name="ISME J.">
        <title>The genome sequence of the psychrophilic archaeon, Methanococcoides burtonii: the role of genome evolution in cold adaptation.</title>
        <authorList>
            <person name="Allen M.A."/>
            <person name="Lauro F.M."/>
            <person name="Williams T.J."/>
            <person name="Burg D."/>
            <person name="Siddiqui K.S."/>
            <person name="De Francisci D."/>
            <person name="Chong K.W."/>
            <person name="Pilak O."/>
            <person name="Chew H.H."/>
            <person name="De Maere M.Z."/>
            <person name="Ting L."/>
            <person name="Katrib M."/>
            <person name="Ng C."/>
            <person name="Sowers K.R."/>
            <person name="Galperin M.Y."/>
            <person name="Anderson I.J."/>
            <person name="Ivanova N."/>
            <person name="Dalin E."/>
            <person name="Martinez M."/>
            <person name="Lapidus A."/>
            <person name="Hauser L."/>
            <person name="Land M."/>
            <person name="Thomas T."/>
            <person name="Cavicchioli R."/>
        </authorList>
    </citation>
    <scope>NUCLEOTIDE SEQUENCE [LARGE SCALE GENOMIC DNA]</scope>
    <source>
        <strain>DSM 6242 / NBRC 107633 / OCM 468 / ACE-M</strain>
    </source>
</reference>
<name>DPHB_METBU</name>